<reference key="1">
    <citation type="journal article" date="2005" name="J. Bacteriol.">
        <title>Insights on evolution of virulence and resistance from the complete genome analysis of an early methicillin-resistant Staphylococcus aureus strain and a biofilm-producing methicillin-resistant Staphylococcus epidermidis strain.</title>
        <authorList>
            <person name="Gill S.R."/>
            <person name="Fouts D.E."/>
            <person name="Archer G.L."/>
            <person name="Mongodin E.F."/>
            <person name="DeBoy R.T."/>
            <person name="Ravel J."/>
            <person name="Paulsen I.T."/>
            <person name="Kolonay J.F."/>
            <person name="Brinkac L.M."/>
            <person name="Beanan M.J."/>
            <person name="Dodson R.J."/>
            <person name="Daugherty S.C."/>
            <person name="Madupu R."/>
            <person name="Angiuoli S.V."/>
            <person name="Durkin A.S."/>
            <person name="Haft D.H."/>
            <person name="Vamathevan J.J."/>
            <person name="Khouri H."/>
            <person name="Utterback T.R."/>
            <person name="Lee C."/>
            <person name="Dimitrov G."/>
            <person name="Jiang L."/>
            <person name="Qin H."/>
            <person name="Weidman J."/>
            <person name="Tran K."/>
            <person name="Kang K.H."/>
            <person name="Hance I.R."/>
            <person name="Nelson K.E."/>
            <person name="Fraser C.M."/>
        </authorList>
    </citation>
    <scope>NUCLEOTIDE SEQUENCE [LARGE SCALE GENOMIC DNA]</scope>
    <source>
        <strain>COL</strain>
    </source>
</reference>
<organism>
    <name type="scientific">Staphylococcus aureus (strain COL)</name>
    <dbReference type="NCBI Taxonomy" id="93062"/>
    <lineage>
        <taxon>Bacteria</taxon>
        <taxon>Bacillati</taxon>
        <taxon>Bacillota</taxon>
        <taxon>Bacilli</taxon>
        <taxon>Bacillales</taxon>
        <taxon>Staphylococcaceae</taxon>
        <taxon>Staphylococcus</taxon>
    </lineage>
</organism>
<feature type="chain" id="PRO_0000132456" description="Small ribosomal subunit protein uS4">
    <location>
        <begin position="1"/>
        <end position="200"/>
    </location>
</feature>
<feature type="domain" description="S4 RNA-binding" evidence="1">
    <location>
        <begin position="92"/>
        <end position="155"/>
    </location>
</feature>
<sequence>MARFRGSNWKKSRRLGISLSGTGKELEKRPYAPGQHGPNQRKKLSEYGLQLREKQKLRYLYGMTERQFRNTFDIAGKKFGVHGENFMILLASRLDAVVYSLGLARTRRQARQLVNHGHILVDGKRVDIPSYSVKPGQTISVREKSQKLNIIVESVEINNFVPEYLNFDADSLTGTFVRLPERSELPAEINEQLIVEYYSR</sequence>
<gene>
    <name evidence="1" type="primary">rpsD</name>
    <name type="ordered locus">SACOL1769</name>
</gene>
<proteinExistence type="inferred from homology"/>
<accession>Q5HF54</accession>
<dbReference type="EMBL" id="CP000046">
    <property type="protein sequence ID" value="AAW38298.1"/>
    <property type="molecule type" value="Genomic_DNA"/>
</dbReference>
<dbReference type="RefSeq" id="WP_000090512.1">
    <property type="nucleotide sequence ID" value="NZ_JBGOFO010000008.1"/>
</dbReference>
<dbReference type="SMR" id="Q5HF54"/>
<dbReference type="KEGG" id="sac:SACOL1769"/>
<dbReference type="HOGENOM" id="CLU_092403_0_1_9"/>
<dbReference type="Proteomes" id="UP000000530">
    <property type="component" value="Chromosome"/>
</dbReference>
<dbReference type="GO" id="GO:0015935">
    <property type="term" value="C:small ribosomal subunit"/>
    <property type="evidence" value="ECO:0007669"/>
    <property type="project" value="InterPro"/>
</dbReference>
<dbReference type="GO" id="GO:0019843">
    <property type="term" value="F:rRNA binding"/>
    <property type="evidence" value="ECO:0007669"/>
    <property type="project" value="UniProtKB-UniRule"/>
</dbReference>
<dbReference type="GO" id="GO:0003735">
    <property type="term" value="F:structural constituent of ribosome"/>
    <property type="evidence" value="ECO:0007669"/>
    <property type="project" value="InterPro"/>
</dbReference>
<dbReference type="GO" id="GO:0042274">
    <property type="term" value="P:ribosomal small subunit biogenesis"/>
    <property type="evidence" value="ECO:0007669"/>
    <property type="project" value="TreeGrafter"/>
</dbReference>
<dbReference type="GO" id="GO:0006412">
    <property type="term" value="P:translation"/>
    <property type="evidence" value="ECO:0007669"/>
    <property type="project" value="UniProtKB-UniRule"/>
</dbReference>
<dbReference type="CDD" id="cd00165">
    <property type="entry name" value="S4"/>
    <property type="match status" value="1"/>
</dbReference>
<dbReference type="FunFam" id="1.10.1050.10:FF:000001">
    <property type="entry name" value="30S ribosomal protein S4"/>
    <property type="match status" value="1"/>
</dbReference>
<dbReference type="FunFam" id="3.10.290.10:FF:000001">
    <property type="entry name" value="30S ribosomal protein S4"/>
    <property type="match status" value="1"/>
</dbReference>
<dbReference type="Gene3D" id="1.10.1050.10">
    <property type="entry name" value="Ribosomal Protein S4 Delta 41, Chain A, domain 1"/>
    <property type="match status" value="1"/>
</dbReference>
<dbReference type="Gene3D" id="3.10.290.10">
    <property type="entry name" value="RNA-binding S4 domain"/>
    <property type="match status" value="1"/>
</dbReference>
<dbReference type="HAMAP" id="MF_01306_B">
    <property type="entry name" value="Ribosomal_uS4_B"/>
    <property type="match status" value="1"/>
</dbReference>
<dbReference type="InterPro" id="IPR022801">
    <property type="entry name" value="Ribosomal_uS4"/>
</dbReference>
<dbReference type="InterPro" id="IPR005709">
    <property type="entry name" value="Ribosomal_uS4_bac-type"/>
</dbReference>
<dbReference type="InterPro" id="IPR018079">
    <property type="entry name" value="Ribosomal_uS4_CS"/>
</dbReference>
<dbReference type="InterPro" id="IPR001912">
    <property type="entry name" value="Ribosomal_uS4_N"/>
</dbReference>
<dbReference type="InterPro" id="IPR002942">
    <property type="entry name" value="S4_RNA-bd"/>
</dbReference>
<dbReference type="InterPro" id="IPR036986">
    <property type="entry name" value="S4_RNA-bd_sf"/>
</dbReference>
<dbReference type="NCBIfam" id="NF003717">
    <property type="entry name" value="PRK05327.1"/>
    <property type="match status" value="1"/>
</dbReference>
<dbReference type="NCBIfam" id="TIGR01017">
    <property type="entry name" value="rpsD_bact"/>
    <property type="match status" value="1"/>
</dbReference>
<dbReference type="PANTHER" id="PTHR11831">
    <property type="entry name" value="30S 40S RIBOSOMAL PROTEIN"/>
    <property type="match status" value="1"/>
</dbReference>
<dbReference type="PANTHER" id="PTHR11831:SF4">
    <property type="entry name" value="SMALL RIBOSOMAL SUBUNIT PROTEIN US4M"/>
    <property type="match status" value="1"/>
</dbReference>
<dbReference type="Pfam" id="PF00163">
    <property type="entry name" value="Ribosomal_S4"/>
    <property type="match status" value="1"/>
</dbReference>
<dbReference type="Pfam" id="PF01479">
    <property type="entry name" value="S4"/>
    <property type="match status" value="1"/>
</dbReference>
<dbReference type="SMART" id="SM01390">
    <property type="entry name" value="Ribosomal_S4"/>
    <property type="match status" value="1"/>
</dbReference>
<dbReference type="SMART" id="SM00363">
    <property type="entry name" value="S4"/>
    <property type="match status" value="1"/>
</dbReference>
<dbReference type="SUPFAM" id="SSF55174">
    <property type="entry name" value="Alpha-L RNA-binding motif"/>
    <property type="match status" value="1"/>
</dbReference>
<dbReference type="PROSITE" id="PS00632">
    <property type="entry name" value="RIBOSOMAL_S4"/>
    <property type="match status" value="1"/>
</dbReference>
<dbReference type="PROSITE" id="PS50889">
    <property type="entry name" value="S4"/>
    <property type="match status" value="1"/>
</dbReference>
<name>RS4_STAAC</name>
<protein>
    <recommendedName>
        <fullName evidence="1">Small ribosomal subunit protein uS4</fullName>
    </recommendedName>
    <alternativeName>
        <fullName evidence="2">30S ribosomal protein S4</fullName>
    </alternativeName>
</protein>
<comment type="function">
    <text evidence="1">One of the primary rRNA binding proteins, it binds directly to 16S rRNA where it nucleates assembly of the body of the 30S subunit.</text>
</comment>
<comment type="function">
    <text evidence="1">With S5 and S12 plays an important role in translational accuracy.</text>
</comment>
<comment type="subunit">
    <text evidence="1">Part of the 30S ribosomal subunit. Contacts protein S5. The interaction surface between S4 and S5 is involved in control of translational fidelity.</text>
</comment>
<comment type="similarity">
    <text evidence="1">Belongs to the universal ribosomal protein uS4 family.</text>
</comment>
<evidence type="ECO:0000255" key="1">
    <source>
        <dbReference type="HAMAP-Rule" id="MF_01306"/>
    </source>
</evidence>
<evidence type="ECO:0000305" key="2"/>
<keyword id="KW-0687">Ribonucleoprotein</keyword>
<keyword id="KW-0689">Ribosomal protein</keyword>
<keyword id="KW-0694">RNA-binding</keyword>
<keyword id="KW-0699">rRNA-binding</keyword>